<sequence length="511" mass="57964">MSIPTDIANLLIGEDAKLSIHFDKIPLHNDAHHSGSKFYMLSTNRALRDHEEKEDDLKYLSKGRQGAIRLNQLLNAPHLIKERESTAQNEGKAVMRLGETAMVIDETFDAQPIHSHIWNSFMSIEFRFPQADFTSLQYLQTSWKGLESGDTLYTKEGTPTFEEVSIVSGVCLFNARLLEMSTTCPKSGGVDVDLLKSSTPTYNELDYIARASSAIADVAAMNILRACEQDSGQRLTIKLDIPSWHYFHTVATKFVSKQCSNTEVLQWMDAVDQRHDQIGQTFVEAIRYGLEQRGIHDSTSYGIGMTSRTNTAAILIRTAIEHEEVPSLDAILAALDSEEDGCWKRFYEMIPVKERPSNLDQLGYLYYVYEAIRPSLAERPAPVPLESDQTKKANLSKKALKKRKPRRLIISVDDSAERRIYSRAQRVLSKIRQCSEKPETYLVESYVCRRFLVNGNEDRARLGRLDPLPDIPVRTGFHHEPMLPLDVVRQLYGNKSALNLQRWLQEAGLSV</sequence>
<gene>
    <name evidence="3" type="primary">eshA</name>
</gene>
<dbReference type="EC" id="6.3.2.-" evidence="2"/>
<dbReference type="EMBL" id="OP596310">
    <property type="protein sequence ID" value="UZP48212.1"/>
    <property type="molecule type" value="Genomic_DNA"/>
</dbReference>
<dbReference type="GO" id="GO:0016874">
    <property type="term" value="F:ligase activity"/>
    <property type="evidence" value="ECO:0007669"/>
    <property type="project" value="UniProtKB-KW"/>
</dbReference>
<feature type="chain" id="PRO_0000461006" description="Arginine-containing cyclodipeptide synthase eshA">
    <location>
        <begin position="1"/>
        <end position="511"/>
    </location>
</feature>
<feature type="short sequence motif" description="Conserved DDXXE motif" evidence="1">
    <location>
        <begin position="413"/>
        <end position="417"/>
    </location>
</feature>
<reference key="1">
    <citation type="journal article" date="2023" name="Nat. Chem. Biol.">
        <title>Genome mining for unknown-unknown natural products.</title>
        <authorList>
            <person name="Yee D.A."/>
            <person name="Niwa K."/>
            <person name="Perlatti B."/>
            <person name="Chen M."/>
            <person name="Li Y."/>
            <person name="Tang Y."/>
        </authorList>
    </citation>
    <scope>NUCLEOTIDE SEQUENCE [GENOMIC DNA]</scope>
    <scope>FUNCTION</scope>
    <scope>CATALYTIC ACTIVITY</scope>
    <scope>PATHWAY</scope>
</reference>
<evidence type="ECO:0000250" key="1">
    <source>
        <dbReference type="UniProtKB" id="P9WEJ7"/>
    </source>
</evidence>
<evidence type="ECO:0000269" key="2">
    <source>
    </source>
</evidence>
<evidence type="ECO:0000303" key="3">
    <source>
    </source>
</evidence>
<evidence type="ECO:0000305" key="4"/>
<evidence type="ECO:0000305" key="5">
    <source>
    </source>
</evidence>
<protein>
    <recommendedName>
        <fullName evidence="3">Arginine-containing cyclodipeptide synthase eshA</fullName>
        <shortName evidence="3">RCDPS eshA</shortName>
        <ecNumber evidence="2">6.3.2.-</ecNumber>
    </recommendedName>
</protein>
<keyword id="KW-0436">Ligase</keyword>
<proteinExistence type="evidence at protein level"/>
<comment type="function">
    <text evidence="2 5">Arginine-containing cyclodipeptide synthase; part of the cluster that mediates the biosynthesis of a highly modified cyclo-arginine-leucine dipeptide (cRW) (PubMed:36702957). Within the pathway, eshA acts as the scaffold-generating enzyme and is responsible for formation of the cyclo-Arg-Leu diketopiperazine (cRL) from L-arginyl-tRNA(Arg) + L-Leucyl-tRNA(Leu) (PubMed:36702957). Additional enzymes from the cluster then further modify the cyclo-Arg-Leu diketopiperazine (cRW) scaffold (Probable).</text>
</comment>
<comment type="catalytic activity">
    <reaction evidence="2">
        <text>L-arginyl-tRNA(Arg) + L-leucyl-tRNA(Leu) = cyclo(L-arginyl-L-leucyl) + tRNA(Arg) + tRNA(Leu) + 2 H(+)</text>
        <dbReference type="Rhea" id="RHEA:80427"/>
        <dbReference type="Rhea" id="RHEA-COMP:9613"/>
        <dbReference type="Rhea" id="RHEA-COMP:9622"/>
        <dbReference type="Rhea" id="RHEA-COMP:9658"/>
        <dbReference type="Rhea" id="RHEA-COMP:9673"/>
        <dbReference type="ChEBI" id="CHEBI:15378"/>
        <dbReference type="ChEBI" id="CHEBI:78442"/>
        <dbReference type="ChEBI" id="CHEBI:78494"/>
        <dbReference type="ChEBI" id="CHEBI:78513"/>
        <dbReference type="ChEBI" id="CHEBI:231492"/>
    </reaction>
    <physiologicalReaction direction="left-to-right" evidence="2">
        <dbReference type="Rhea" id="RHEA:80428"/>
    </physiologicalReaction>
</comment>
<comment type="pathway">
    <text evidence="2">Secondary metabolite biosynthesis.</text>
</comment>
<comment type="domain">
    <text evidence="1">The conserved DDXXE motif is essential for catalytic activity.</text>
</comment>
<comment type="similarity">
    <text evidence="4">Belongs to the arginine-containing cyclodipeptide synthase family.</text>
</comment>
<accession>P9WEK2</accession>
<organism>
    <name type="scientific">Penicillium shearii</name>
    <name type="common">Eupenicillium shearii</name>
    <dbReference type="NCBI Taxonomy" id="904690"/>
    <lineage>
        <taxon>Eukaryota</taxon>
        <taxon>Fungi</taxon>
        <taxon>Dikarya</taxon>
        <taxon>Ascomycota</taxon>
        <taxon>Pezizomycotina</taxon>
        <taxon>Eurotiomycetes</taxon>
        <taxon>Eurotiomycetidae</taxon>
        <taxon>Eurotiales</taxon>
        <taxon>Aspergillaceae</taxon>
        <taxon>Penicillium</taxon>
    </lineage>
</organism>
<name>ESHA_PENSH</name>